<name>OVCH2_XENLA</name>
<protein>
    <recommendedName>
        <fullName evidence="8">Ovochymase-2</fullName>
        <ecNumber evidence="6">3.4.21.120</ecNumber>
    </recommendedName>
    <alternativeName>
        <fullName>Oviductal protease</fullName>
    </alternativeName>
    <alternativeName>
        <fullName evidence="7">Oviductin</fullName>
    </alternativeName>
</protein>
<comment type="function">
    <text evidence="6">Converts the glycoprotein envelope surrounding the egg from an unfertilizable to a fertilizable form during its transit through the pars recta portion of the oviduct by selectively hydrolyzing the envelope glycoprotein gp43. The egg envelope is converted to a sperm-penetrable form, via an increase in sperm binding.</text>
</comment>
<comment type="catalytic activity">
    <reaction evidence="6">
        <text>Preferential cleavage at 371-Gly-Ser-Arg-|-Trp-374 of glycoprotein gp43 in Xenopus laevis coelemic egg envelope to yield gp41.</text>
        <dbReference type="EC" id="3.4.21.120"/>
    </reaction>
</comment>
<comment type="subcellular location">
    <subcellularLocation>
        <location evidence="6">Secreted</location>
    </subcellularLocation>
</comment>
<comment type="tissue specificity">
    <text evidence="6">Specifically expressed in the pars recta oviduct.</text>
</comment>
<comment type="PTM">
    <text evidence="6">The catalytically inactive 110 kDa form is processed both N- and C-terminally to give rise to the 66 kDa catalytically active form.</text>
</comment>
<comment type="similarity">
    <text evidence="4">Belongs to the peptidase S1 family.</text>
</comment>
<organism>
    <name type="scientific">Xenopus laevis</name>
    <name type="common">African clawed frog</name>
    <dbReference type="NCBI Taxonomy" id="8355"/>
    <lineage>
        <taxon>Eukaryota</taxon>
        <taxon>Metazoa</taxon>
        <taxon>Chordata</taxon>
        <taxon>Craniata</taxon>
        <taxon>Vertebrata</taxon>
        <taxon>Euteleostomi</taxon>
        <taxon>Amphibia</taxon>
        <taxon>Batrachia</taxon>
        <taxon>Anura</taxon>
        <taxon>Pipoidea</taxon>
        <taxon>Pipidae</taxon>
        <taxon>Xenopodinae</taxon>
        <taxon>Xenopus</taxon>
        <taxon>Xenopus</taxon>
    </lineage>
</organism>
<dbReference type="EC" id="3.4.21.120" evidence="6"/>
<dbReference type="EMBL" id="U81291">
    <property type="protein sequence ID" value="AAB53972.1"/>
    <property type="molecule type" value="mRNA"/>
</dbReference>
<dbReference type="PIR" id="T30338">
    <property type="entry name" value="T30338"/>
</dbReference>
<dbReference type="RefSeq" id="NP_001081896.1">
    <property type="nucleotide sequence ID" value="NM_001088427.1"/>
</dbReference>
<dbReference type="SMR" id="P79953"/>
<dbReference type="MEROPS" id="S01.240"/>
<dbReference type="GlyCosmos" id="P79953">
    <property type="glycosylation" value="5 sites, No reported glycans"/>
</dbReference>
<dbReference type="GeneID" id="398108"/>
<dbReference type="KEGG" id="xla:398108"/>
<dbReference type="AGR" id="Xenbase:XB-GENE-955936"/>
<dbReference type="CTD" id="398108"/>
<dbReference type="Xenbase" id="XB-GENE-955936">
    <property type="gene designation" value="ovch2.S"/>
</dbReference>
<dbReference type="OrthoDB" id="6380398at2759"/>
<dbReference type="BRENDA" id="3.4.21.120">
    <property type="organism ID" value="6725"/>
</dbReference>
<dbReference type="Proteomes" id="UP000186698">
    <property type="component" value="Chromosome 4S"/>
</dbReference>
<dbReference type="GO" id="GO:0005576">
    <property type="term" value="C:extracellular region"/>
    <property type="evidence" value="ECO:0007669"/>
    <property type="project" value="UniProtKB-SubCell"/>
</dbReference>
<dbReference type="GO" id="GO:0046872">
    <property type="term" value="F:metal ion binding"/>
    <property type="evidence" value="ECO:0007669"/>
    <property type="project" value="UniProtKB-KW"/>
</dbReference>
<dbReference type="GO" id="GO:0004252">
    <property type="term" value="F:serine-type endopeptidase activity"/>
    <property type="evidence" value="ECO:0007669"/>
    <property type="project" value="InterPro"/>
</dbReference>
<dbReference type="GO" id="GO:0006508">
    <property type="term" value="P:proteolysis"/>
    <property type="evidence" value="ECO:0007669"/>
    <property type="project" value="UniProtKB-KW"/>
</dbReference>
<dbReference type="CDD" id="cd00041">
    <property type="entry name" value="CUB"/>
    <property type="match status" value="3"/>
</dbReference>
<dbReference type="CDD" id="cd00190">
    <property type="entry name" value="Tryp_SPc"/>
    <property type="match status" value="2"/>
</dbReference>
<dbReference type="FunFam" id="2.60.120.290:FF:000013">
    <property type="entry name" value="Membrane frizzled-related protein"/>
    <property type="match status" value="1"/>
</dbReference>
<dbReference type="FunFam" id="2.40.10.10:FF:000003">
    <property type="entry name" value="Transmembrane serine protease 3"/>
    <property type="match status" value="2"/>
</dbReference>
<dbReference type="Gene3D" id="2.60.120.290">
    <property type="entry name" value="Spermadhesin, CUB domain"/>
    <property type="match status" value="3"/>
</dbReference>
<dbReference type="Gene3D" id="2.40.10.10">
    <property type="entry name" value="Trypsin-like serine proteases"/>
    <property type="match status" value="2"/>
</dbReference>
<dbReference type="InterPro" id="IPR000859">
    <property type="entry name" value="CUB_dom"/>
</dbReference>
<dbReference type="InterPro" id="IPR009003">
    <property type="entry name" value="Peptidase_S1_PA"/>
</dbReference>
<dbReference type="InterPro" id="IPR043504">
    <property type="entry name" value="Peptidase_S1_PA_chymotrypsin"/>
</dbReference>
<dbReference type="InterPro" id="IPR001314">
    <property type="entry name" value="Peptidase_S1A"/>
</dbReference>
<dbReference type="InterPro" id="IPR035914">
    <property type="entry name" value="Sperma_CUB_dom_sf"/>
</dbReference>
<dbReference type="InterPro" id="IPR001254">
    <property type="entry name" value="Trypsin_dom"/>
</dbReference>
<dbReference type="InterPro" id="IPR018114">
    <property type="entry name" value="TRYPSIN_HIS"/>
</dbReference>
<dbReference type="InterPro" id="IPR033116">
    <property type="entry name" value="TRYPSIN_SER"/>
</dbReference>
<dbReference type="PANTHER" id="PTHR24252">
    <property type="entry name" value="ACROSIN-RELATED"/>
    <property type="match status" value="1"/>
</dbReference>
<dbReference type="PANTHER" id="PTHR24252:SF18">
    <property type="entry name" value="OVOCHYMASE 1"/>
    <property type="match status" value="1"/>
</dbReference>
<dbReference type="Pfam" id="PF00431">
    <property type="entry name" value="CUB"/>
    <property type="match status" value="3"/>
</dbReference>
<dbReference type="Pfam" id="PF00089">
    <property type="entry name" value="Trypsin"/>
    <property type="match status" value="2"/>
</dbReference>
<dbReference type="PRINTS" id="PR00722">
    <property type="entry name" value="CHYMOTRYPSIN"/>
</dbReference>
<dbReference type="SMART" id="SM00042">
    <property type="entry name" value="CUB"/>
    <property type="match status" value="3"/>
</dbReference>
<dbReference type="SMART" id="SM00020">
    <property type="entry name" value="Tryp_SPc"/>
    <property type="match status" value="2"/>
</dbReference>
<dbReference type="SUPFAM" id="SSF49854">
    <property type="entry name" value="Spermadhesin, CUB domain"/>
    <property type="match status" value="3"/>
</dbReference>
<dbReference type="SUPFAM" id="SSF50494">
    <property type="entry name" value="Trypsin-like serine proteases"/>
    <property type="match status" value="2"/>
</dbReference>
<dbReference type="PROSITE" id="PS01180">
    <property type="entry name" value="CUB"/>
    <property type="match status" value="2"/>
</dbReference>
<dbReference type="PROSITE" id="PS50240">
    <property type="entry name" value="TRYPSIN_DOM"/>
    <property type="match status" value="2"/>
</dbReference>
<dbReference type="PROSITE" id="PS00134">
    <property type="entry name" value="TRYPSIN_HIS"/>
    <property type="match status" value="1"/>
</dbReference>
<dbReference type="PROSITE" id="PS00135">
    <property type="entry name" value="TRYPSIN_SER"/>
    <property type="match status" value="1"/>
</dbReference>
<feature type="signal peptide" evidence="2">
    <location>
        <begin position="1"/>
        <end position="19"/>
    </location>
</feature>
<feature type="propeptide" id="PRO_0000261191" description="Activation peptide" evidence="6">
    <location>
        <begin position="20"/>
        <end position="45"/>
    </location>
</feature>
<feature type="chain" id="PRO_0000261192" description="Ovochymase-2">
    <location>
        <begin position="46"/>
        <end position="583"/>
    </location>
</feature>
<feature type="propeptide" id="PRO_0000261193" description="Activation peptide" evidence="2">
    <location>
        <begin position="584"/>
        <end position="1004"/>
    </location>
</feature>
<feature type="domain" description="Peptidase S1 1" evidence="4">
    <location>
        <begin position="46"/>
        <end position="295"/>
    </location>
</feature>
<feature type="domain" description="CUB 1" evidence="3">
    <location>
        <begin position="309"/>
        <end position="419"/>
    </location>
</feature>
<feature type="domain" description="CUB 2" evidence="3">
    <location>
        <begin position="429"/>
        <end position="541"/>
    </location>
</feature>
<feature type="domain" description="Peptidase S1 2" evidence="4">
    <location>
        <begin position="580"/>
        <end position="820"/>
    </location>
</feature>
<feature type="region of interest" description="Disordered" evidence="5">
    <location>
        <begin position="547"/>
        <end position="566"/>
    </location>
</feature>
<feature type="compositionally biased region" description="Polar residues" evidence="5">
    <location>
        <begin position="547"/>
        <end position="558"/>
    </location>
</feature>
<feature type="active site" description="Charge relay system" evidence="1">
    <location>
        <position position="86"/>
    </location>
</feature>
<feature type="active site" description="Charge relay system" evidence="1">
    <location>
        <position position="136"/>
    </location>
</feature>
<feature type="active site" description="Charge relay system" evidence="1">
    <location>
        <position position="234"/>
    </location>
</feature>
<feature type="binding site" evidence="1">
    <location>
        <position position="113"/>
    </location>
    <ligand>
        <name>Ca(2+)</name>
        <dbReference type="ChEBI" id="CHEBI:29108"/>
    </ligand>
</feature>
<feature type="glycosylation site" description="N-linked (GlcNAc...) asparagine" evidence="2">
    <location>
        <position position="128"/>
    </location>
</feature>
<feature type="glycosylation site" description="N-linked (GlcNAc...) asparagine" evidence="2">
    <location>
        <position position="351"/>
    </location>
</feature>
<feature type="glycosylation site" description="N-linked (GlcNAc...) asparagine" evidence="2">
    <location>
        <position position="408"/>
    </location>
</feature>
<feature type="glycosylation site" description="N-linked (GlcNAc...) asparagine" evidence="2">
    <location>
        <position position="763"/>
    </location>
</feature>
<feature type="glycosylation site" description="N-linked (GlcNAc...) asparagine" evidence="2">
    <location>
        <position position="940"/>
    </location>
</feature>
<feature type="disulfide bond" evidence="1">
    <location>
        <begin position="71"/>
        <end position="87"/>
    </location>
</feature>
<feature type="disulfide bond" evidence="1">
    <location>
        <begin position="170"/>
        <end position="240"/>
    </location>
</feature>
<feature type="disulfide bond" evidence="1">
    <location>
        <begin position="201"/>
        <end position="219"/>
    </location>
</feature>
<feature type="disulfide bond" evidence="1">
    <location>
        <begin position="230"/>
        <end position="259"/>
    </location>
</feature>
<feature type="disulfide bond" evidence="1">
    <location>
        <begin position="363"/>
        <end position="382"/>
    </location>
</feature>
<feature type="disulfide bond" evidence="1">
    <location>
        <begin position="429"/>
        <end position="456"/>
    </location>
</feature>
<feature type="disulfide bond" evidence="1">
    <location>
        <begin position="483"/>
        <end position="504"/>
    </location>
</feature>
<feature type="disulfide bond" evidence="1">
    <location>
        <begin position="609"/>
        <end position="625"/>
    </location>
</feature>
<feature type="disulfide bond" evidence="1">
    <location>
        <begin position="706"/>
        <end position="776"/>
    </location>
</feature>
<feature type="disulfide bond" evidence="1">
    <location>
        <begin position="737"/>
        <end position="754"/>
    </location>
</feature>
<feature type="disulfide bond" evidence="1">
    <location>
        <begin position="766"/>
        <end position="796"/>
    </location>
</feature>
<accession>P79953</accession>
<sequence length="1004" mass="110612">MPTRNLLLGSILLSLAVKGDPGPHRGARCGVSPLGSATELNYLSRIVGGRESKKGQHPWTVSLKRNGKHFCGGTLVSHCHVLTAAHCLLDRNVKLYMRVYIGEYDQILKEETEQMFRVIEIFKHPNFNQSQPMNYDVAVLLLDGSVTFDENIQPACLPNPDDVFEPGDLCVTLGWGHLTENGILPVVLQEVYLPIVDLSSCLHVMSALKGTVVSSYIVCAGFPEGGKDACQGDSGGPLLCQRRHGSWVLHGLTSWGMGCGRSWKNNVFLPHNRKGSPGIFTDIQKLLGWVSSQLNTAVPNKNQESCSMQDGVLSGKSGELIFLKNPMSVTRTMSGAPGFSLSLKTCTSCLNFTHLDIESDFACNLDYLAIYTDSHRLIGKFCGDIPPRSLLISFSSIKLNFFSDFHENRTGFVLYYSAVEPNTYPDSGCGSFAVLFEEGEIQSMNYPENYLSNSRCHWIIHGPSGSYIKLQFEDFALEPSDDCRSDYLAVYQDLAAEDKIETFCGFSLPAPVYSTTAVMHIKFSTDERDNDKGFRATFTFVSPNSLVEDSRQGNMPSTNKKETTAQDSICGVSQVPPIFIYNSIAKVEEAVPHSWPWHTSLQYAGEHVCDGAIIAENWILTTASCVLNRKFNDVWLVDPGIHDLLRPGHNQKGLVKQIIPHPSFSSQTNDFDIALVELDESLQFNSDIFPICLPGKTSELAPASLCVVSGWSLRGKEAEKSTKLQQREVPILTDDACSAHYIQNPGGITDRMLCAGIGTGQDNDSCSEQSGSPLVCLLEKKGIYTIFGIASWGVNCKENSKPGIYTKVSPFIDWIRQIMSDTGQIHSNLGDPKPHPMGNIEPEETAGRDIIQGGFPTNDASSNQNLYIASSCEDVVLLQSPGEIKMETKSQMYPNGFSCQWRIIAPKFQIIKLVMKQVHMSAENGKCCNSLIIYEGISKNKTLKVRFPTDEMVPGTVWSEGSSVTIESPPHPVDPEFGFCLVYSFHSRTQSQDHVVPDSDSSEP</sequence>
<gene>
    <name type="primary">ovch2</name>
    <name type="synonym">ovtn</name>
</gene>
<keyword id="KW-0106">Calcium</keyword>
<keyword id="KW-0903">Direct protein sequencing</keyword>
<keyword id="KW-1015">Disulfide bond</keyword>
<keyword id="KW-0325">Glycoprotein</keyword>
<keyword id="KW-0378">Hydrolase</keyword>
<keyword id="KW-0479">Metal-binding</keyword>
<keyword id="KW-0645">Protease</keyword>
<keyword id="KW-1185">Reference proteome</keyword>
<keyword id="KW-0677">Repeat</keyword>
<keyword id="KW-0964">Secreted</keyword>
<keyword id="KW-0720">Serine protease</keyword>
<keyword id="KW-0732">Signal</keyword>
<keyword id="KW-0865">Zymogen</keyword>
<reference key="1">
    <citation type="journal article" date="1999" name="Biol. Reprod.">
        <title>Oviductin, the Xenopus laevis oviductal protease that processes egg envelope glycoprotein gp43, increases sperm binding to envelopes, and is translated as part of an unusual mosaic protein composed of two protease and several CUB domains.</title>
        <authorList>
            <person name="Lindsay L.L."/>
            <person name="Wieduwilt M.J."/>
            <person name="Hedrick J.L."/>
        </authorList>
    </citation>
    <scope>NUCLEOTIDE SEQUENCE [MRNA]</scope>
    <scope>PROTEIN SEQUENCE OF 46-73</scope>
    <scope>FUNCTION</scope>
    <scope>PTM</scope>
    <scope>TISSUE SPECIFICITY</scope>
    <scope>SUBCELLULAR LOCATION</scope>
    <scope>CATALYTIC ACTIVITY</scope>
</reference>
<proteinExistence type="evidence at protein level"/>
<evidence type="ECO:0000250" key="1"/>
<evidence type="ECO:0000255" key="2"/>
<evidence type="ECO:0000255" key="3">
    <source>
        <dbReference type="PROSITE-ProRule" id="PRU00059"/>
    </source>
</evidence>
<evidence type="ECO:0000255" key="4">
    <source>
        <dbReference type="PROSITE-ProRule" id="PRU00274"/>
    </source>
</evidence>
<evidence type="ECO:0000256" key="5">
    <source>
        <dbReference type="SAM" id="MobiDB-lite"/>
    </source>
</evidence>
<evidence type="ECO:0000269" key="6">
    <source>
    </source>
</evidence>
<evidence type="ECO:0000303" key="7">
    <source>
    </source>
</evidence>
<evidence type="ECO:0000305" key="8"/>